<name>CSPL9_ARALL</name>
<protein>
    <recommendedName>
        <fullName>CASP-like protein 1E2</fullName>
        <shortName>AlCASPL1E2</shortName>
    </recommendedName>
</protein>
<comment type="subunit">
    <text evidence="1">Homodimer and heterodimers.</text>
</comment>
<comment type="subcellular location">
    <subcellularLocation>
        <location evidence="1">Cell membrane</location>
        <topology evidence="1">Multi-pass membrane protein</topology>
    </subcellularLocation>
</comment>
<comment type="similarity">
    <text evidence="4">Belongs to the Casparian strip membrane proteins (CASP) family.</text>
</comment>
<dbReference type="EMBL" id="GL348719">
    <property type="protein sequence ID" value="EFH46484.1"/>
    <property type="molecule type" value="Genomic_DNA"/>
</dbReference>
<dbReference type="RefSeq" id="XP_002870225.1">
    <property type="nucleotide sequence ID" value="XM_002870179.1"/>
</dbReference>
<dbReference type="STRING" id="81972.D7MAF6"/>
<dbReference type="EnsemblPlants" id="fgenesh2_kg.7__2756__AT4G15620.1">
    <property type="protein sequence ID" value="fgenesh2_kg.7__2756__AT4G15620.1"/>
    <property type="gene ID" value="fgenesh2_kg.7__2756__AT4G15620.1"/>
</dbReference>
<dbReference type="Gramene" id="fgenesh2_kg.7__2756__AT4G15620.1">
    <property type="protein sequence ID" value="fgenesh2_kg.7__2756__AT4G15620.1"/>
    <property type="gene ID" value="fgenesh2_kg.7__2756__AT4G15620.1"/>
</dbReference>
<dbReference type="eggNOG" id="ENOG502RZNK">
    <property type="taxonomic scope" value="Eukaryota"/>
</dbReference>
<dbReference type="HOGENOM" id="CLU_066104_1_0_1"/>
<dbReference type="OrthoDB" id="1898688at2759"/>
<dbReference type="Proteomes" id="UP000008694">
    <property type="component" value="Unassembled WGS sequence"/>
</dbReference>
<dbReference type="GO" id="GO:0005886">
    <property type="term" value="C:plasma membrane"/>
    <property type="evidence" value="ECO:0007669"/>
    <property type="project" value="UniProtKB-SubCell"/>
</dbReference>
<dbReference type="InterPro" id="IPR006459">
    <property type="entry name" value="CASP/CASPL"/>
</dbReference>
<dbReference type="InterPro" id="IPR006702">
    <property type="entry name" value="CASP_dom"/>
</dbReference>
<dbReference type="InterPro" id="IPR044173">
    <property type="entry name" value="CASPL"/>
</dbReference>
<dbReference type="NCBIfam" id="TIGR01569">
    <property type="entry name" value="A_tha_TIGR01569"/>
    <property type="match status" value="1"/>
</dbReference>
<dbReference type="PANTHER" id="PTHR36488">
    <property type="entry name" value="CASP-LIKE PROTEIN 1U1"/>
    <property type="match status" value="1"/>
</dbReference>
<dbReference type="PANTHER" id="PTHR36488:SF8">
    <property type="entry name" value="CASP-LIKE PROTEIN 1U1"/>
    <property type="match status" value="1"/>
</dbReference>
<dbReference type="Pfam" id="PF04535">
    <property type="entry name" value="CASP_dom"/>
    <property type="match status" value="1"/>
</dbReference>
<feature type="chain" id="PRO_0000412008" description="CASP-like protein 1E2">
    <location>
        <begin position="1"/>
        <end position="190"/>
    </location>
</feature>
<feature type="topological domain" description="Cytoplasmic" evidence="2">
    <location>
        <begin position="1"/>
        <end position="28"/>
    </location>
</feature>
<feature type="transmembrane region" description="Helical" evidence="2">
    <location>
        <begin position="29"/>
        <end position="49"/>
    </location>
</feature>
<feature type="topological domain" description="Extracellular" evidence="2">
    <location>
        <begin position="50"/>
        <end position="83"/>
    </location>
</feature>
<feature type="transmembrane region" description="Helical" evidence="2">
    <location>
        <begin position="84"/>
        <end position="104"/>
    </location>
</feature>
<feature type="topological domain" description="Cytoplasmic" evidence="2">
    <location>
        <begin position="105"/>
        <end position="111"/>
    </location>
</feature>
<feature type="transmembrane region" description="Helical" evidence="2">
    <location>
        <begin position="112"/>
        <end position="132"/>
    </location>
</feature>
<feature type="topological domain" description="Extracellular" evidence="2">
    <location>
        <begin position="133"/>
        <end position="163"/>
    </location>
</feature>
<feature type="transmembrane region" description="Helical" evidence="2">
    <location>
        <begin position="164"/>
        <end position="184"/>
    </location>
</feature>
<feature type="topological domain" description="Cytoplasmic" evidence="2">
    <location>
        <begin position="185"/>
        <end position="190"/>
    </location>
</feature>
<feature type="region of interest" description="Disordered" evidence="3">
    <location>
        <begin position="1"/>
        <end position="24"/>
    </location>
</feature>
<feature type="compositionally biased region" description="Low complexity" evidence="3">
    <location>
        <begin position="1"/>
        <end position="12"/>
    </location>
</feature>
<feature type="compositionally biased region" description="Basic and acidic residues" evidence="3">
    <location>
        <begin position="13"/>
        <end position="24"/>
    </location>
</feature>
<proteinExistence type="inferred from homology"/>
<reference key="1">
    <citation type="journal article" date="2011" name="Nat. Genet.">
        <title>The Arabidopsis lyrata genome sequence and the basis of rapid genome size change.</title>
        <authorList>
            <person name="Hu T.T."/>
            <person name="Pattyn P."/>
            <person name="Bakker E.G."/>
            <person name="Cao J."/>
            <person name="Cheng J.-F."/>
            <person name="Clark R.M."/>
            <person name="Fahlgren N."/>
            <person name="Fawcett J.A."/>
            <person name="Grimwood J."/>
            <person name="Gundlach H."/>
            <person name="Haberer G."/>
            <person name="Hollister J.D."/>
            <person name="Ossowski S."/>
            <person name="Ottilar R.P."/>
            <person name="Salamov A.A."/>
            <person name="Schneeberger K."/>
            <person name="Spannagl M."/>
            <person name="Wang X."/>
            <person name="Yang L."/>
            <person name="Nasrallah M.E."/>
            <person name="Bergelson J."/>
            <person name="Carrington J.C."/>
            <person name="Gaut B.S."/>
            <person name="Schmutz J."/>
            <person name="Mayer K.F.X."/>
            <person name="Van de Peer Y."/>
            <person name="Grigoriev I.V."/>
            <person name="Nordborg M."/>
            <person name="Weigel D."/>
            <person name="Guo Y.-L."/>
        </authorList>
    </citation>
    <scope>NUCLEOTIDE SEQUENCE [LARGE SCALE GENOMIC DNA]</scope>
    <source>
        <strain>cv. MN47</strain>
    </source>
</reference>
<reference key="2">
    <citation type="journal article" date="2014" name="Plant Physiol.">
        <title>Functional and evolutionary analysis of the CASPARIAN STRIP MEMBRANE DOMAIN PROTEIN family.</title>
        <authorList>
            <person name="Roppolo D."/>
            <person name="Boeckmann B."/>
            <person name="Pfister A."/>
            <person name="Boutet E."/>
            <person name="Rubio M.C."/>
            <person name="Denervaud-Tendon V."/>
            <person name="Vermeer J.E."/>
            <person name="Gheyselinck J."/>
            <person name="Xenarios I."/>
            <person name="Geldner N."/>
        </authorList>
    </citation>
    <scope>GENE FAMILY</scope>
    <scope>NOMENCLATURE</scope>
</reference>
<accession>D7MAF6</accession>
<organism>
    <name type="scientific">Arabidopsis lyrata subsp. lyrata</name>
    <name type="common">Lyre-leaved rock-cress</name>
    <dbReference type="NCBI Taxonomy" id="81972"/>
    <lineage>
        <taxon>Eukaryota</taxon>
        <taxon>Viridiplantae</taxon>
        <taxon>Streptophyta</taxon>
        <taxon>Embryophyta</taxon>
        <taxon>Tracheophyta</taxon>
        <taxon>Spermatophyta</taxon>
        <taxon>Magnoliopsida</taxon>
        <taxon>eudicotyledons</taxon>
        <taxon>Gunneridae</taxon>
        <taxon>Pentapetalae</taxon>
        <taxon>rosids</taxon>
        <taxon>malvids</taxon>
        <taxon>Brassicales</taxon>
        <taxon>Brassicaceae</taxon>
        <taxon>Camelineae</taxon>
        <taxon>Arabidopsis</taxon>
    </lineage>
</organism>
<sequence>MENEGKNNMNGMEMEKGKRESRSRKGVELTMRVLALVLTMAAATVLGVAKQTKVVSIKLIPALPPLDITTTAKASYLSAFVYNISANAIACGYTAISIAILMISRGRRSKKLLMAVLLGDLVMVALLFSGTGAASAIGLMGLQGNKHVMWNKVCGVFGKFCHRAAPSLPLTFLAAVVFMFLVVLDAIKLP</sequence>
<keyword id="KW-1003">Cell membrane</keyword>
<keyword id="KW-0472">Membrane</keyword>
<keyword id="KW-1185">Reference proteome</keyword>
<keyword id="KW-0812">Transmembrane</keyword>
<keyword id="KW-1133">Transmembrane helix</keyword>
<evidence type="ECO:0000250" key="1"/>
<evidence type="ECO:0000255" key="2"/>
<evidence type="ECO:0000256" key="3">
    <source>
        <dbReference type="SAM" id="MobiDB-lite"/>
    </source>
</evidence>
<evidence type="ECO:0000305" key="4"/>
<gene>
    <name type="ORF">ARALYDRAFT_493323</name>
</gene>